<feature type="chain" id="PRO_0000366751" description="Ribosomal RNA large subunit methyltransferase K/L">
    <location>
        <begin position="1"/>
        <end position="717"/>
    </location>
</feature>
<feature type="domain" description="THUMP" evidence="1">
    <location>
        <begin position="44"/>
        <end position="155"/>
    </location>
</feature>
<dbReference type="EC" id="2.1.1.173" evidence="1"/>
<dbReference type="EC" id="2.1.1.264" evidence="1"/>
<dbReference type="EMBL" id="CP000803">
    <property type="protein sequence ID" value="ABU61835.1"/>
    <property type="molecule type" value="Genomic_DNA"/>
</dbReference>
<dbReference type="SMR" id="A7NCY2"/>
<dbReference type="KEGG" id="fta:FTA_1360"/>
<dbReference type="HOGENOM" id="CLU_014042_2_0_6"/>
<dbReference type="GO" id="GO:0005737">
    <property type="term" value="C:cytoplasm"/>
    <property type="evidence" value="ECO:0007669"/>
    <property type="project" value="UniProtKB-SubCell"/>
</dbReference>
<dbReference type="GO" id="GO:0052915">
    <property type="term" value="F:23S rRNA (guanine(2445)-N(2))-methyltransferase activity"/>
    <property type="evidence" value="ECO:0007669"/>
    <property type="project" value="UniProtKB-UniRule"/>
</dbReference>
<dbReference type="GO" id="GO:0003723">
    <property type="term" value="F:RNA binding"/>
    <property type="evidence" value="ECO:0007669"/>
    <property type="project" value="UniProtKB-KW"/>
</dbReference>
<dbReference type="GO" id="GO:0070043">
    <property type="term" value="F:rRNA (guanine-N7-)-methyltransferase activity"/>
    <property type="evidence" value="ECO:0007669"/>
    <property type="project" value="UniProtKB-UniRule"/>
</dbReference>
<dbReference type="CDD" id="cd02440">
    <property type="entry name" value="AdoMet_MTases"/>
    <property type="match status" value="1"/>
</dbReference>
<dbReference type="CDD" id="cd11715">
    <property type="entry name" value="THUMP_AdoMetMT"/>
    <property type="match status" value="1"/>
</dbReference>
<dbReference type="Gene3D" id="3.30.2130.30">
    <property type="match status" value="1"/>
</dbReference>
<dbReference type="Gene3D" id="3.30.750.80">
    <property type="entry name" value="RNA methyltransferase domain (HRMD) like"/>
    <property type="match status" value="1"/>
</dbReference>
<dbReference type="Gene3D" id="3.40.50.150">
    <property type="entry name" value="Vaccinia Virus protein VP39"/>
    <property type="match status" value="2"/>
</dbReference>
<dbReference type="HAMAP" id="MF_01858">
    <property type="entry name" value="23SrRNA_methyltr_KL"/>
    <property type="match status" value="1"/>
</dbReference>
<dbReference type="InterPro" id="IPR017244">
    <property type="entry name" value="23SrRNA_methyltr_KL"/>
</dbReference>
<dbReference type="InterPro" id="IPR002052">
    <property type="entry name" value="DNA_methylase_N6_adenine_CS"/>
</dbReference>
<dbReference type="InterPro" id="IPR000241">
    <property type="entry name" value="RlmKL-like_Mtase"/>
</dbReference>
<dbReference type="InterPro" id="IPR053943">
    <property type="entry name" value="RlmKL-like_Mtase_CS"/>
</dbReference>
<dbReference type="InterPro" id="IPR054170">
    <property type="entry name" value="RlmL_1st"/>
</dbReference>
<dbReference type="InterPro" id="IPR019614">
    <property type="entry name" value="SAM-dep_methyl-trfase"/>
</dbReference>
<dbReference type="InterPro" id="IPR029063">
    <property type="entry name" value="SAM-dependent_MTases_sf"/>
</dbReference>
<dbReference type="InterPro" id="IPR004114">
    <property type="entry name" value="THUMP_dom"/>
</dbReference>
<dbReference type="NCBIfam" id="NF008748">
    <property type="entry name" value="PRK11783.1"/>
    <property type="match status" value="1"/>
</dbReference>
<dbReference type="PANTHER" id="PTHR47313">
    <property type="entry name" value="RIBOSOMAL RNA LARGE SUBUNIT METHYLTRANSFERASE K/L"/>
    <property type="match status" value="1"/>
</dbReference>
<dbReference type="PANTHER" id="PTHR47313:SF1">
    <property type="entry name" value="RIBOSOMAL RNA LARGE SUBUNIT METHYLTRANSFERASE K_L"/>
    <property type="match status" value="1"/>
</dbReference>
<dbReference type="Pfam" id="PF10672">
    <property type="entry name" value="Methyltrans_SAM"/>
    <property type="match status" value="1"/>
</dbReference>
<dbReference type="Pfam" id="PF22020">
    <property type="entry name" value="RlmL_1st"/>
    <property type="match status" value="1"/>
</dbReference>
<dbReference type="Pfam" id="PF02926">
    <property type="entry name" value="THUMP"/>
    <property type="match status" value="1"/>
</dbReference>
<dbReference type="Pfam" id="PF01170">
    <property type="entry name" value="UPF0020"/>
    <property type="match status" value="1"/>
</dbReference>
<dbReference type="PIRSF" id="PIRSF037618">
    <property type="entry name" value="RNA_Mtase_bacteria_prd"/>
    <property type="match status" value="1"/>
</dbReference>
<dbReference type="SMART" id="SM00981">
    <property type="entry name" value="THUMP"/>
    <property type="match status" value="1"/>
</dbReference>
<dbReference type="SUPFAM" id="SSF53335">
    <property type="entry name" value="S-adenosyl-L-methionine-dependent methyltransferases"/>
    <property type="match status" value="2"/>
</dbReference>
<dbReference type="PROSITE" id="PS51165">
    <property type="entry name" value="THUMP"/>
    <property type="match status" value="1"/>
</dbReference>
<dbReference type="PROSITE" id="PS01261">
    <property type="entry name" value="UPF0020"/>
    <property type="match status" value="1"/>
</dbReference>
<comment type="function">
    <text evidence="1">Specifically methylates the guanine in position 2445 (m2G2445) and the guanine in position 2069 (m7G2069) of 23S rRNA.</text>
</comment>
<comment type="catalytic activity">
    <reaction evidence="1">
        <text>guanosine(2445) in 23S rRNA + S-adenosyl-L-methionine = N(2)-methylguanosine(2445) in 23S rRNA + S-adenosyl-L-homocysteine + H(+)</text>
        <dbReference type="Rhea" id="RHEA:42740"/>
        <dbReference type="Rhea" id="RHEA-COMP:10215"/>
        <dbReference type="Rhea" id="RHEA-COMP:10216"/>
        <dbReference type="ChEBI" id="CHEBI:15378"/>
        <dbReference type="ChEBI" id="CHEBI:57856"/>
        <dbReference type="ChEBI" id="CHEBI:59789"/>
        <dbReference type="ChEBI" id="CHEBI:74269"/>
        <dbReference type="ChEBI" id="CHEBI:74481"/>
        <dbReference type="EC" id="2.1.1.173"/>
    </reaction>
</comment>
<comment type="catalytic activity">
    <reaction evidence="1">
        <text>guanosine(2069) in 23S rRNA + S-adenosyl-L-methionine = N(2)-methylguanosine(2069) in 23S rRNA + S-adenosyl-L-homocysteine + H(+)</text>
        <dbReference type="Rhea" id="RHEA:43772"/>
        <dbReference type="Rhea" id="RHEA-COMP:10688"/>
        <dbReference type="Rhea" id="RHEA-COMP:10689"/>
        <dbReference type="ChEBI" id="CHEBI:15378"/>
        <dbReference type="ChEBI" id="CHEBI:57856"/>
        <dbReference type="ChEBI" id="CHEBI:59789"/>
        <dbReference type="ChEBI" id="CHEBI:74269"/>
        <dbReference type="ChEBI" id="CHEBI:74481"/>
        <dbReference type="EC" id="2.1.1.264"/>
    </reaction>
</comment>
<comment type="subcellular location">
    <subcellularLocation>
        <location evidence="1">Cytoplasm</location>
    </subcellularLocation>
</comment>
<comment type="similarity">
    <text evidence="1">Belongs to the methyltransferase superfamily. RlmKL family.</text>
</comment>
<accession>A7NCY2</accession>
<gene>
    <name evidence="1" type="primary">rlmL</name>
    <name type="ordered locus">FTA_1360</name>
</gene>
<evidence type="ECO:0000255" key="1">
    <source>
        <dbReference type="HAMAP-Rule" id="MF_01858"/>
    </source>
</evidence>
<keyword id="KW-0963">Cytoplasm</keyword>
<keyword id="KW-0489">Methyltransferase</keyword>
<keyword id="KW-0694">RNA-binding</keyword>
<keyword id="KW-0698">rRNA processing</keyword>
<keyword id="KW-0949">S-adenosyl-L-methionine</keyword>
<keyword id="KW-0808">Transferase</keyword>
<organism>
    <name type="scientific">Francisella tularensis subsp. holarctica (strain FTNF002-00 / FTA)</name>
    <dbReference type="NCBI Taxonomy" id="458234"/>
    <lineage>
        <taxon>Bacteria</taxon>
        <taxon>Pseudomonadati</taxon>
        <taxon>Pseudomonadota</taxon>
        <taxon>Gammaproteobacteria</taxon>
        <taxon>Thiotrichales</taxon>
        <taxon>Francisellaceae</taxon>
        <taxon>Francisella</taxon>
    </lineage>
</organism>
<sequence length="717" mass="83482">MQKFTFFVSCAKGIELLLKDELERLGISSQEKLAGVEFEGSIKDAYKVCIYSYLASQVMLKVATDKVINQQDLYEFISSINWMDYFAVDKTFKIIISGKHYDFNNTMFVSQKTKDAIVDQFRNVINQRPNIDTENPDNVIKLHLHKQFVNVFLCLNIDSLHKRSYRQFQGQAPLKESLAAAILIKAGWLEELKKHQPILIDPMCGSGTILIEAALMAKNIAPVLLNKEFKIFNSKFHNQELWDNLLEIAKNSQKVTNAIICGFDIDNNVLDKAQRNIYQAGVEDVVTVKRQDIRDLENEFESEGLIVTNPPYGERLYGDQLDELLDIFNGFGDRLSQDFYGWKVAVLTSFADSIKEMQLRTTERNKFYNGAIETILYQFKINEHAKFKHETQLEKNIRIAEASAQKSDEHIDFANKLKKNLKSLKPWLKQTGLECYRLYDADIPTFAVAVDVYSEHIFLQEYRADATIDQNIAKQRFYQAIYQIHKTLDIKYENIHTRVRQRQKGKEQYQKENDKNKFHIINEFDAKFYVNFDDYLDTGIFLDHRKIRQLVAKAAKNKTLLNLFSYTCTASVHAALKGAKTTSVDMSNTYLEWGKNNFTLNNIDAKKHSFIQADCISWLKTNKDKFDVIFLDPPTFSNSKRMDDILDIQRDHELLINLAMDSLKKDGILYFSNNYRRFKMSPQILEKFNCENIDKICLSRDFLSNKNIHNCWEIKYK</sequence>
<proteinExistence type="inferred from homology"/>
<reference key="1">
    <citation type="journal article" date="2009" name="PLoS ONE">
        <title>Complete genome sequence of Francisella tularensis subspecies holarctica FTNF002-00.</title>
        <authorList>
            <person name="Barabote R.D."/>
            <person name="Xie G."/>
            <person name="Brettin T.S."/>
            <person name="Hinrichs S.H."/>
            <person name="Fey P.D."/>
            <person name="Jay J.J."/>
            <person name="Engle J.L."/>
            <person name="Godbole S.D."/>
            <person name="Noronha J.M."/>
            <person name="Scheuermann R.H."/>
            <person name="Zhou L.W."/>
            <person name="Lion C."/>
            <person name="Dempsey M.P."/>
        </authorList>
    </citation>
    <scope>NUCLEOTIDE SEQUENCE [LARGE SCALE GENOMIC DNA]</scope>
    <source>
        <strain>FTNF002-00 / FTA</strain>
    </source>
</reference>
<name>RLMKL_FRATF</name>
<protein>
    <recommendedName>
        <fullName evidence="1">Ribosomal RNA large subunit methyltransferase K/L</fullName>
    </recommendedName>
    <domain>
        <recommendedName>
            <fullName evidence="1">23S rRNA m2G2445 methyltransferase</fullName>
            <ecNumber evidence="1">2.1.1.173</ecNumber>
        </recommendedName>
        <alternativeName>
            <fullName evidence="1">rRNA (guanine-N(2)-)-methyltransferase RlmL</fullName>
        </alternativeName>
    </domain>
    <domain>
        <recommendedName>
            <fullName evidence="1">23S rRNA m7G2069 methyltransferase</fullName>
            <ecNumber evidence="1">2.1.1.264</ecNumber>
        </recommendedName>
        <alternativeName>
            <fullName evidence="1">rRNA (guanine-N(7)-)-methyltransferase RlmK</fullName>
        </alternativeName>
    </domain>
</protein>